<name>ITR1_CANAL</name>
<accession>A0A1D8PH98</accession>
<reference evidence="12" key="1">
    <citation type="journal article" date="2004" name="Proc. Natl. Acad. Sci. U.S.A.">
        <title>The diploid genome sequence of Candida albicans.</title>
        <authorList>
            <person name="Jones T."/>
            <person name="Federspiel N.A."/>
            <person name="Chibana H."/>
            <person name="Dungan J."/>
            <person name="Kalman S."/>
            <person name="Magee B.B."/>
            <person name="Newport G."/>
            <person name="Thorstenson Y.R."/>
            <person name="Agabian N."/>
            <person name="Magee P.T."/>
            <person name="Davis R.W."/>
            <person name="Scherer S."/>
        </authorList>
    </citation>
    <scope>NUCLEOTIDE SEQUENCE [LARGE SCALE GENOMIC DNA]</scope>
    <source>
        <strain evidence="12">SC5314 / ATCC MYA-2876</strain>
    </source>
</reference>
<reference evidence="12" key="2">
    <citation type="journal article" date="2007" name="Genome Biol.">
        <title>Assembly of the Candida albicans genome into sixteen supercontigs aligned on the eight chromosomes.</title>
        <authorList>
            <person name="van het Hoog M."/>
            <person name="Rast T.J."/>
            <person name="Martchenko M."/>
            <person name="Grindle S."/>
            <person name="Dignard D."/>
            <person name="Hogues H."/>
            <person name="Cuomo C."/>
            <person name="Berriman M."/>
            <person name="Scherer S."/>
            <person name="Magee B.B."/>
            <person name="Whiteway M."/>
            <person name="Chibana H."/>
            <person name="Nantel A."/>
            <person name="Magee P.T."/>
        </authorList>
    </citation>
    <scope>GENOME REANNOTATION</scope>
    <source>
        <strain evidence="12">SC5314 / ATCC MYA-2876</strain>
    </source>
</reference>
<reference evidence="12" key="3">
    <citation type="journal article" date="2013" name="Genome Biol.">
        <title>Assembly of a phased diploid Candida albicans genome facilitates allele-specific measurements and provides a simple model for repeat and indel structure.</title>
        <authorList>
            <person name="Muzzey D."/>
            <person name="Schwartz K."/>
            <person name="Weissman J.S."/>
            <person name="Sherlock G."/>
        </authorList>
    </citation>
    <scope>NUCLEOTIDE SEQUENCE [LARGE SCALE GENOMIC DNA]</scope>
    <scope>GENOME REANNOTATION</scope>
    <source>
        <strain>SC5314 / ATCC MYA-2876</strain>
    </source>
</reference>
<reference evidence="8" key="4">
    <citation type="journal article" date="2008" name="Infect. Immun.">
        <title>Candida albicans uses multiple mechanisms to acquire the essential metabolite inositol during infection.</title>
        <authorList>
            <person name="Chen Y.L."/>
            <person name="Kauffman S."/>
            <person name="Reynolds T.B."/>
        </authorList>
    </citation>
    <scope>FUNCTION</scope>
    <scope>CATALYTIC ACTIVITY</scope>
    <scope>DISRUPTION PHENOTYPE</scope>
</reference>
<sequence>MGSSTNNTQSKATPSVLENEVNSSKSSVVSSTSSAKGLLRETTNHGTMETSSVQISESESRPSKMVLVLTLASSISGFMFGYDTGYISSALVQIGTDLSNKILTSGEKEFITSATSLGALLGAVVGGVLANLIGRRRVLLGSNIIFVVGTIIQLAARTVWTMIAGRFVLGWGVGIASLIAPLMISELAPAKYRGRLIVTNVIFITGGQLIAYFINWGLTRVSHGWRVSVGLCMVPPVLQFVLFWFLPDTPRFYVMNGNFEKARQVLRKVHVDPSDEFVNATIDEMIASDSTVPGNGPLQKAWKSIKIIHTTPGNFRALILACGLQGIQQFTGFNSLMYFSATIFETIGFHNATAVSIIIAATNFVFTGIAICIIDKVGRRRILLVGMPCMCISLIVCAVAFHYLNVDFSTGTVVSRGINGWGIVVIIGMILYVASYAIGIGNAAWVGVELFSDVNVRSIGAMYAACTNWAGSLVIASTFLTMLENITPTGTFSFFAGLCFIAFFFVYFLLPDTAGLELEETTDFLSNGFNVKQAAQLSKERKKHSKFAKSKPTV</sequence>
<dbReference type="EMBL" id="CP017624">
    <property type="protein sequence ID" value="AOW27513.1"/>
    <property type="molecule type" value="Genomic_DNA"/>
</dbReference>
<dbReference type="RefSeq" id="XP_714885.1">
    <property type="nucleotide sequence ID" value="XM_709792.2"/>
</dbReference>
<dbReference type="SMR" id="A0A1D8PH98"/>
<dbReference type="FunCoup" id="A0A1D8PH98">
    <property type="interactions" value="1289"/>
</dbReference>
<dbReference type="STRING" id="237561.A0A1D8PH98"/>
<dbReference type="EnsemblFungi" id="C2_04940C_A-T">
    <property type="protein sequence ID" value="C2_04940C_A-T-p1"/>
    <property type="gene ID" value="C2_04940C_A"/>
</dbReference>
<dbReference type="GeneID" id="3643440"/>
<dbReference type="KEGG" id="cal:CAALFM_C204940CA"/>
<dbReference type="CGD" id="CAL0000201160">
    <property type="gene designation" value="ITR1"/>
</dbReference>
<dbReference type="VEuPathDB" id="FungiDB:C2_04940C_A"/>
<dbReference type="eggNOG" id="KOG0254">
    <property type="taxonomic scope" value="Eukaryota"/>
</dbReference>
<dbReference type="InParanoid" id="A0A1D8PH98"/>
<dbReference type="OMA" id="ETGWRWM"/>
<dbReference type="OrthoDB" id="6339427at2759"/>
<dbReference type="Proteomes" id="UP000000559">
    <property type="component" value="Chromosome 2"/>
</dbReference>
<dbReference type="GO" id="GO:0016020">
    <property type="term" value="C:membrane"/>
    <property type="evidence" value="ECO:0000318"/>
    <property type="project" value="GO_Central"/>
</dbReference>
<dbReference type="GO" id="GO:0005886">
    <property type="term" value="C:plasma membrane"/>
    <property type="evidence" value="ECO:0007669"/>
    <property type="project" value="UniProtKB-SubCell"/>
</dbReference>
<dbReference type="GO" id="GO:0005365">
    <property type="term" value="F:myo-inositol transmembrane transporter activity"/>
    <property type="evidence" value="ECO:0000315"/>
    <property type="project" value="CGD"/>
</dbReference>
<dbReference type="GO" id="GO:0005366">
    <property type="term" value="F:myo-inositol:proton symporter activity"/>
    <property type="evidence" value="ECO:0000318"/>
    <property type="project" value="GO_Central"/>
</dbReference>
<dbReference type="GO" id="GO:1904679">
    <property type="term" value="P:myo-inositol import across plasma membrane"/>
    <property type="evidence" value="ECO:0000318"/>
    <property type="project" value="GO_Central"/>
</dbReference>
<dbReference type="GO" id="GO:0015798">
    <property type="term" value="P:myo-inositol transport"/>
    <property type="evidence" value="ECO:0000315"/>
    <property type="project" value="CGD"/>
</dbReference>
<dbReference type="FunFam" id="1.20.1250.20:FF:000073">
    <property type="entry name" value="MFS myo-inositol transporter, putative"/>
    <property type="match status" value="1"/>
</dbReference>
<dbReference type="Gene3D" id="1.20.1250.20">
    <property type="entry name" value="MFS general substrate transporter like domains"/>
    <property type="match status" value="1"/>
</dbReference>
<dbReference type="InterPro" id="IPR020846">
    <property type="entry name" value="MFS_dom"/>
</dbReference>
<dbReference type="InterPro" id="IPR005828">
    <property type="entry name" value="MFS_sugar_transport-like"/>
</dbReference>
<dbReference type="InterPro" id="IPR036259">
    <property type="entry name" value="MFS_trans_sf"/>
</dbReference>
<dbReference type="InterPro" id="IPR050814">
    <property type="entry name" value="Myo-inositol_Transporter"/>
</dbReference>
<dbReference type="InterPro" id="IPR003663">
    <property type="entry name" value="Sugar/inositol_transpt"/>
</dbReference>
<dbReference type="InterPro" id="IPR005829">
    <property type="entry name" value="Sugar_transporter_CS"/>
</dbReference>
<dbReference type="NCBIfam" id="TIGR00879">
    <property type="entry name" value="SP"/>
    <property type="match status" value="1"/>
</dbReference>
<dbReference type="PANTHER" id="PTHR48020">
    <property type="entry name" value="PROTON MYO-INOSITOL COTRANSPORTER"/>
    <property type="match status" value="1"/>
</dbReference>
<dbReference type="PANTHER" id="PTHR48020:SF12">
    <property type="entry name" value="PROTON MYO-INOSITOL COTRANSPORTER"/>
    <property type="match status" value="1"/>
</dbReference>
<dbReference type="Pfam" id="PF00083">
    <property type="entry name" value="Sugar_tr"/>
    <property type="match status" value="1"/>
</dbReference>
<dbReference type="PRINTS" id="PR00171">
    <property type="entry name" value="SUGRTRNSPORT"/>
</dbReference>
<dbReference type="SUPFAM" id="SSF103473">
    <property type="entry name" value="MFS general substrate transporter"/>
    <property type="match status" value="1"/>
</dbReference>
<dbReference type="PROSITE" id="PS50850">
    <property type="entry name" value="MFS"/>
    <property type="match status" value="1"/>
</dbReference>
<dbReference type="PROSITE" id="PS00216">
    <property type="entry name" value="SUGAR_TRANSPORT_1"/>
    <property type="match status" value="1"/>
</dbReference>
<proteinExistence type="evidence at protein level"/>
<keyword id="KW-1003">Cell membrane</keyword>
<keyword id="KW-0325">Glycoprotein</keyword>
<keyword id="KW-0472">Membrane</keyword>
<keyword id="KW-1185">Reference proteome</keyword>
<keyword id="KW-0812">Transmembrane</keyword>
<keyword id="KW-1133">Transmembrane helix</keyword>
<keyword id="KW-0813">Transport</keyword>
<evidence type="ECO:0000250" key="1">
    <source>
        <dbReference type="UniProtKB" id="P30605"/>
    </source>
</evidence>
<evidence type="ECO:0000255" key="2"/>
<evidence type="ECO:0000255" key="3">
    <source>
        <dbReference type="PROSITE-ProRule" id="PRU00498"/>
    </source>
</evidence>
<evidence type="ECO:0000255" key="4">
    <source>
        <dbReference type="RuleBase" id="RU003346"/>
    </source>
</evidence>
<evidence type="ECO:0000256" key="5">
    <source>
        <dbReference type="SAM" id="MobiDB-lite"/>
    </source>
</evidence>
<evidence type="ECO:0000269" key="6">
    <source>
    </source>
</evidence>
<evidence type="ECO:0000303" key="7">
    <source>
    </source>
</evidence>
<evidence type="ECO:0000305" key="8"/>
<evidence type="ECO:0000305" key="9">
    <source>
    </source>
</evidence>
<evidence type="ECO:0000312" key="10">
    <source>
        <dbReference type="CGD" id="CAL0000201160"/>
    </source>
</evidence>
<evidence type="ECO:0000312" key="11">
    <source>
        <dbReference type="EMBL" id="AOW27513.1"/>
    </source>
</evidence>
<evidence type="ECO:0000312" key="12">
    <source>
        <dbReference type="Proteomes" id="UP000000559"/>
    </source>
</evidence>
<protein>
    <recommendedName>
        <fullName evidence="7">Myo-inositol transporter 1</fullName>
    </recommendedName>
</protein>
<gene>
    <name evidence="10" type="primary">ITR1</name>
    <name evidence="10" type="ordered locus">orf19.3526</name>
    <name evidence="11" type="ORF">CAALFM_C204940CA</name>
</gene>
<organism evidence="12">
    <name type="scientific">Candida albicans (strain SC5314 / ATCC MYA-2876)</name>
    <name type="common">Yeast</name>
    <dbReference type="NCBI Taxonomy" id="237561"/>
    <lineage>
        <taxon>Eukaryota</taxon>
        <taxon>Fungi</taxon>
        <taxon>Dikarya</taxon>
        <taxon>Ascomycota</taxon>
        <taxon>Saccharomycotina</taxon>
        <taxon>Pichiomycetes</taxon>
        <taxon>Debaryomycetaceae</taxon>
        <taxon>Candida/Lodderomyces clade</taxon>
        <taxon>Candida</taxon>
    </lineage>
</organism>
<comment type="function">
    <text evidence="6">Major transporter for myo-inositol.</text>
</comment>
<comment type="catalytic activity">
    <reaction evidence="9">
        <text>myo-inositol(out) + H(+)(out) = myo-inositol(in) + H(+)(in)</text>
        <dbReference type="Rhea" id="RHEA:60364"/>
        <dbReference type="ChEBI" id="CHEBI:15378"/>
        <dbReference type="ChEBI" id="CHEBI:17268"/>
    </reaction>
</comment>
<comment type="subcellular location">
    <subcellularLocation>
        <location evidence="1">Cell membrane</location>
        <topology evidence="2">Multi-pass membrane protein</topology>
    </subcellularLocation>
</comment>
<comment type="disruption phenotype">
    <text evidence="6">Decreases myo-inositol import into cell (PubMed:18268031). Virulence is not affected in a mouse model of disseminated infection (PubMed:18268031). Simultaneous disruption of INO1 results in lethality (PubMed:18268031).</text>
</comment>
<comment type="similarity">
    <text evidence="4">Belongs to the major facilitator superfamily. Sugar transporter (TC 2.A.1.1) family.</text>
</comment>
<feature type="chain" id="PRO_0000456706" description="Myo-inositol transporter 1">
    <location>
        <begin position="1"/>
        <end position="554"/>
    </location>
</feature>
<feature type="transmembrane region" description="Helical" evidence="2">
    <location>
        <begin position="65"/>
        <end position="85"/>
    </location>
</feature>
<feature type="transmembrane region" description="Helical" evidence="2">
    <location>
        <begin position="110"/>
        <end position="130"/>
    </location>
</feature>
<feature type="transmembrane region" description="Helical" evidence="2">
    <location>
        <begin position="144"/>
        <end position="164"/>
    </location>
</feature>
<feature type="transmembrane region" description="Helical" evidence="2">
    <location>
        <begin position="167"/>
        <end position="187"/>
    </location>
</feature>
<feature type="transmembrane region" description="Helical" evidence="2">
    <location>
        <begin position="196"/>
        <end position="216"/>
    </location>
</feature>
<feature type="transmembrane region" description="Helical" evidence="2">
    <location>
        <begin position="227"/>
        <end position="247"/>
    </location>
</feature>
<feature type="transmembrane region" description="Helical" evidence="2">
    <location>
        <begin position="313"/>
        <end position="332"/>
    </location>
</feature>
<feature type="transmembrane region" description="Helical" evidence="2">
    <location>
        <begin position="354"/>
        <end position="374"/>
    </location>
</feature>
<feature type="transmembrane region" description="Helical" evidence="2">
    <location>
        <begin position="382"/>
        <end position="402"/>
    </location>
</feature>
<feature type="transmembrane region" description="Helical" evidence="2">
    <location>
        <begin position="420"/>
        <end position="440"/>
    </location>
</feature>
<feature type="transmembrane region" description="Helical" evidence="2">
    <location>
        <begin position="459"/>
        <end position="479"/>
    </location>
</feature>
<feature type="transmembrane region" description="Helical" evidence="2">
    <location>
        <begin position="490"/>
        <end position="510"/>
    </location>
</feature>
<feature type="region of interest" description="Disordered" evidence="5">
    <location>
        <begin position="1"/>
        <end position="57"/>
    </location>
</feature>
<feature type="compositionally biased region" description="Polar residues" evidence="5">
    <location>
        <begin position="1"/>
        <end position="13"/>
    </location>
</feature>
<feature type="compositionally biased region" description="Low complexity" evidence="5">
    <location>
        <begin position="15"/>
        <end position="34"/>
    </location>
</feature>
<feature type="compositionally biased region" description="Polar residues" evidence="5">
    <location>
        <begin position="44"/>
        <end position="57"/>
    </location>
</feature>
<feature type="glycosylation site" description="N-linked (GlcNAc...) asparagine" evidence="3">
    <location>
        <position position="6"/>
    </location>
</feature>
<feature type="glycosylation site" description="N-linked (GlcNAc...) asparagine" evidence="3">
    <location>
        <position position="22"/>
    </location>
</feature>
<feature type="glycosylation site" description="N-linked (GlcNAc...) asparagine" evidence="3">
    <location>
        <position position="279"/>
    </location>
</feature>
<feature type="glycosylation site" description="N-linked (GlcNAc...) asparagine" evidence="3">
    <location>
        <position position="351"/>
    </location>
</feature>